<accession>Q724F0</accession>
<gene>
    <name evidence="1" type="primary">rpoB</name>
    <name type="ordered locus">LMOf2365_0274</name>
</gene>
<sequence length="1184" mass="132604">MSGHSGHDVKYGRHRTRRSFARISEVLELPNLIEIQTASYQWFLDEGLREMFRDISPIEDFAGNLSLEFIDYDLGEPKYSVEESKNRDANYAAPLRVKLRLINKETGEVKDQEVFMGDFPLMTEMGTFIINGAERVIVSQLVRSPGVYFNGKLDKNGKKGFGSTVIPNRGAWLEYETDAKDVVHVRIDRTRKLPVTVLLRALGFGSDQEIIDLIGDNDYLRNTLEKDNTDNAEKALLEIYERLRPGEPPTVDNARSLLVSRFFDPKRYDLASVGRYKINKKLHLKNRLFNQTLAETLVDPETGEIIASKGDILDRRNLDQIIPNLENGVGFRTLRPTDGVMEDSVLVQSIKIYAPNDEEKEINIIGNAYIEENVKHITPSDIISSISYFFNLLHGVGDTDDIDHLGNRRLRSVGELLQNQFRIGLSRMERVVRERMSIQDMTTITPQQLINIRPVVASIKEFFGSSQLSQFMDQTNPLGELTHKRRLSALGPGGLTRERAGYEVRDVHYSHYGRMCPIETPEGPNIGLINSLSSFAKVNKFGFIETPYRRVDPETNRVTDKIDYLTADEEDNYVVAQANSKLDEQGTFTEEEVMARFRSENLAVEKERIDYMDVSPKQVVSVATACIPFLENDDSNRALMGANMQRQAVPLMHPEAPFVGTGMEHVSAKDSGAAVTAKHDGIVEHVEAREIWVRRVSLVDGKEVTGGIDKYTLRKFVRSNQGTCYNQRPNVAEGDRVVKGEILGNGPSMDSGELALGRNVLVAFMTWDGYNYEDAIIMSERLVKDDVYTSIHIEEFESEARDTKLGPEEMTRDIPNVGEDALRDLDERGIIRVGAEVKDNDLLVGKVTPKGVTELTAEERLLHAIFGEKAREVRDTSLRVPHGGGGIVLDVKIFTREAGDELPPGVNQLVRVYIVQKRKIHEGDKMAGRHGNKGVISRILPEEDMPFMPDGTPVDIMLNPLGVPSRMNIGQVLELHLGMAARALGIHVATPVFDGANEEDVWSTVEEAGMARDAKTILYDGRSGEAFDNRISVGVMYMIKLAHMVDDKLHARSTGPYSLVTQQPLGGKAQFGGQRFGEMEVWALEAYGAAYTLQEILTIKSDDVVGRVKTYEAIVKGESVPEPGVPESFKVLIKELQSLGMDVKMLSADEEEIEMRDMDDDDFTNQNDAFNIVQPENAAAEKTE</sequence>
<dbReference type="EC" id="2.7.7.6" evidence="1"/>
<dbReference type="EMBL" id="AE017262">
    <property type="protein sequence ID" value="AAT03061.1"/>
    <property type="molecule type" value="Genomic_DNA"/>
</dbReference>
<dbReference type="RefSeq" id="WP_003723045.1">
    <property type="nucleotide sequence ID" value="NC_002973.6"/>
</dbReference>
<dbReference type="SMR" id="Q724F0"/>
<dbReference type="KEGG" id="lmf:LMOf2365_0274"/>
<dbReference type="HOGENOM" id="CLU_000524_4_1_9"/>
<dbReference type="GO" id="GO:0000428">
    <property type="term" value="C:DNA-directed RNA polymerase complex"/>
    <property type="evidence" value="ECO:0007669"/>
    <property type="project" value="UniProtKB-KW"/>
</dbReference>
<dbReference type="GO" id="GO:0003677">
    <property type="term" value="F:DNA binding"/>
    <property type="evidence" value="ECO:0007669"/>
    <property type="project" value="UniProtKB-UniRule"/>
</dbReference>
<dbReference type="GO" id="GO:0003899">
    <property type="term" value="F:DNA-directed RNA polymerase activity"/>
    <property type="evidence" value="ECO:0007669"/>
    <property type="project" value="UniProtKB-UniRule"/>
</dbReference>
<dbReference type="GO" id="GO:0032549">
    <property type="term" value="F:ribonucleoside binding"/>
    <property type="evidence" value="ECO:0007669"/>
    <property type="project" value="InterPro"/>
</dbReference>
<dbReference type="GO" id="GO:0006351">
    <property type="term" value="P:DNA-templated transcription"/>
    <property type="evidence" value="ECO:0007669"/>
    <property type="project" value="UniProtKB-UniRule"/>
</dbReference>
<dbReference type="CDD" id="cd00653">
    <property type="entry name" value="RNA_pol_B_RPB2"/>
    <property type="match status" value="1"/>
</dbReference>
<dbReference type="FunFam" id="3.90.1800.10:FF:000001">
    <property type="entry name" value="DNA-directed RNA polymerase subunit beta"/>
    <property type="match status" value="1"/>
</dbReference>
<dbReference type="Gene3D" id="2.40.50.100">
    <property type="match status" value="1"/>
</dbReference>
<dbReference type="Gene3D" id="2.40.50.150">
    <property type="match status" value="1"/>
</dbReference>
<dbReference type="Gene3D" id="3.90.1100.10">
    <property type="match status" value="2"/>
</dbReference>
<dbReference type="Gene3D" id="2.30.150.10">
    <property type="entry name" value="DNA-directed RNA polymerase, beta subunit, external 1 domain"/>
    <property type="match status" value="1"/>
</dbReference>
<dbReference type="Gene3D" id="2.40.270.10">
    <property type="entry name" value="DNA-directed RNA polymerase, subunit 2, domain 6"/>
    <property type="match status" value="2"/>
</dbReference>
<dbReference type="Gene3D" id="3.90.1800.10">
    <property type="entry name" value="RNA polymerase alpha subunit dimerisation domain"/>
    <property type="match status" value="1"/>
</dbReference>
<dbReference type="Gene3D" id="3.90.1110.10">
    <property type="entry name" value="RNA polymerase Rpb2, domain 2"/>
    <property type="match status" value="2"/>
</dbReference>
<dbReference type="HAMAP" id="MF_01321">
    <property type="entry name" value="RNApol_bact_RpoB"/>
    <property type="match status" value="1"/>
</dbReference>
<dbReference type="InterPro" id="IPR042107">
    <property type="entry name" value="DNA-dir_RNA_pol_bsu_ext_1_sf"/>
</dbReference>
<dbReference type="InterPro" id="IPR019462">
    <property type="entry name" value="DNA-dir_RNA_pol_bsu_external_1"/>
</dbReference>
<dbReference type="InterPro" id="IPR015712">
    <property type="entry name" value="DNA-dir_RNA_pol_su2"/>
</dbReference>
<dbReference type="InterPro" id="IPR007120">
    <property type="entry name" value="DNA-dir_RNAP_su2_dom"/>
</dbReference>
<dbReference type="InterPro" id="IPR037033">
    <property type="entry name" value="DNA-dir_RNAP_su2_hyb_sf"/>
</dbReference>
<dbReference type="InterPro" id="IPR010243">
    <property type="entry name" value="RNA_pol_bsu_bac"/>
</dbReference>
<dbReference type="InterPro" id="IPR007121">
    <property type="entry name" value="RNA_pol_bsu_CS"/>
</dbReference>
<dbReference type="InterPro" id="IPR007644">
    <property type="entry name" value="RNA_pol_bsu_protrusion"/>
</dbReference>
<dbReference type="InterPro" id="IPR007642">
    <property type="entry name" value="RNA_pol_Rpb2_2"/>
</dbReference>
<dbReference type="InterPro" id="IPR037034">
    <property type="entry name" value="RNA_pol_Rpb2_2_sf"/>
</dbReference>
<dbReference type="InterPro" id="IPR007645">
    <property type="entry name" value="RNA_pol_Rpb2_3"/>
</dbReference>
<dbReference type="InterPro" id="IPR007641">
    <property type="entry name" value="RNA_pol_Rpb2_7"/>
</dbReference>
<dbReference type="InterPro" id="IPR014724">
    <property type="entry name" value="RNA_pol_RPB2_OB-fold"/>
</dbReference>
<dbReference type="NCBIfam" id="NF001616">
    <property type="entry name" value="PRK00405.1"/>
    <property type="match status" value="1"/>
</dbReference>
<dbReference type="NCBIfam" id="TIGR02013">
    <property type="entry name" value="rpoB"/>
    <property type="match status" value="1"/>
</dbReference>
<dbReference type="PANTHER" id="PTHR20856">
    <property type="entry name" value="DNA-DIRECTED RNA POLYMERASE I SUBUNIT 2"/>
    <property type="match status" value="1"/>
</dbReference>
<dbReference type="Pfam" id="PF04563">
    <property type="entry name" value="RNA_pol_Rpb2_1"/>
    <property type="match status" value="1"/>
</dbReference>
<dbReference type="Pfam" id="PF04561">
    <property type="entry name" value="RNA_pol_Rpb2_2"/>
    <property type="match status" value="2"/>
</dbReference>
<dbReference type="Pfam" id="PF04565">
    <property type="entry name" value="RNA_pol_Rpb2_3"/>
    <property type="match status" value="1"/>
</dbReference>
<dbReference type="Pfam" id="PF10385">
    <property type="entry name" value="RNA_pol_Rpb2_45"/>
    <property type="match status" value="1"/>
</dbReference>
<dbReference type="Pfam" id="PF00562">
    <property type="entry name" value="RNA_pol_Rpb2_6"/>
    <property type="match status" value="1"/>
</dbReference>
<dbReference type="Pfam" id="PF04560">
    <property type="entry name" value="RNA_pol_Rpb2_7"/>
    <property type="match status" value="1"/>
</dbReference>
<dbReference type="SUPFAM" id="SSF64484">
    <property type="entry name" value="beta and beta-prime subunits of DNA dependent RNA-polymerase"/>
    <property type="match status" value="1"/>
</dbReference>
<dbReference type="PROSITE" id="PS01166">
    <property type="entry name" value="RNA_POL_BETA"/>
    <property type="match status" value="1"/>
</dbReference>
<evidence type="ECO:0000255" key="1">
    <source>
        <dbReference type="HAMAP-Rule" id="MF_01321"/>
    </source>
</evidence>
<evidence type="ECO:0000256" key="2">
    <source>
        <dbReference type="SAM" id="MobiDB-lite"/>
    </source>
</evidence>
<keyword id="KW-0240">DNA-directed RNA polymerase</keyword>
<keyword id="KW-0548">Nucleotidyltransferase</keyword>
<keyword id="KW-0804">Transcription</keyword>
<keyword id="KW-0808">Transferase</keyword>
<protein>
    <recommendedName>
        <fullName evidence="1">DNA-directed RNA polymerase subunit beta</fullName>
        <shortName evidence="1">RNAP subunit beta</shortName>
        <ecNumber evidence="1">2.7.7.6</ecNumber>
    </recommendedName>
    <alternativeName>
        <fullName evidence="1">RNA polymerase subunit beta</fullName>
    </alternativeName>
    <alternativeName>
        <fullName evidence="1">Transcriptase subunit beta</fullName>
    </alternativeName>
</protein>
<reference key="1">
    <citation type="journal article" date="2004" name="Nucleic Acids Res.">
        <title>Whole genome comparisons of serotype 4b and 1/2a strains of the food-borne pathogen Listeria monocytogenes reveal new insights into the core genome components of this species.</title>
        <authorList>
            <person name="Nelson K.E."/>
            <person name="Fouts D.E."/>
            <person name="Mongodin E.F."/>
            <person name="Ravel J."/>
            <person name="DeBoy R.T."/>
            <person name="Kolonay J.F."/>
            <person name="Rasko D.A."/>
            <person name="Angiuoli S.V."/>
            <person name="Gill S.R."/>
            <person name="Paulsen I.T."/>
            <person name="Peterson J.D."/>
            <person name="White O."/>
            <person name="Nelson W.C."/>
            <person name="Nierman W.C."/>
            <person name="Beanan M.J."/>
            <person name="Brinkac L.M."/>
            <person name="Daugherty S.C."/>
            <person name="Dodson R.J."/>
            <person name="Durkin A.S."/>
            <person name="Madupu R."/>
            <person name="Haft D.H."/>
            <person name="Selengut J."/>
            <person name="Van Aken S.E."/>
            <person name="Khouri H.M."/>
            <person name="Fedorova N."/>
            <person name="Forberger H.A."/>
            <person name="Tran B."/>
            <person name="Kathariou S."/>
            <person name="Wonderling L.D."/>
            <person name="Uhlich G.A."/>
            <person name="Bayles D.O."/>
            <person name="Luchansky J.B."/>
            <person name="Fraser C.M."/>
        </authorList>
    </citation>
    <scope>NUCLEOTIDE SEQUENCE [LARGE SCALE GENOMIC DNA]</scope>
    <source>
        <strain>F2365</strain>
    </source>
</reference>
<proteinExistence type="inferred from homology"/>
<name>RPOB_LISMF</name>
<organism>
    <name type="scientific">Listeria monocytogenes serotype 4b (strain F2365)</name>
    <dbReference type="NCBI Taxonomy" id="265669"/>
    <lineage>
        <taxon>Bacteria</taxon>
        <taxon>Bacillati</taxon>
        <taxon>Bacillota</taxon>
        <taxon>Bacilli</taxon>
        <taxon>Bacillales</taxon>
        <taxon>Listeriaceae</taxon>
        <taxon>Listeria</taxon>
    </lineage>
</organism>
<feature type="chain" id="PRO_0000047916" description="DNA-directed RNA polymerase subunit beta">
    <location>
        <begin position="1"/>
        <end position="1184"/>
    </location>
</feature>
<feature type="region of interest" description="Disordered" evidence="2">
    <location>
        <begin position="1160"/>
        <end position="1184"/>
    </location>
</feature>
<comment type="function">
    <text evidence="1">DNA-dependent RNA polymerase catalyzes the transcription of DNA into RNA using the four ribonucleoside triphosphates as substrates.</text>
</comment>
<comment type="catalytic activity">
    <reaction evidence="1">
        <text>RNA(n) + a ribonucleoside 5'-triphosphate = RNA(n+1) + diphosphate</text>
        <dbReference type="Rhea" id="RHEA:21248"/>
        <dbReference type="Rhea" id="RHEA-COMP:14527"/>
        <dbReference type="Rhea" id="RHEA-COMP:17342"/>
        <dbReference type="ChEBI" id="CHEBI:33019"/>
        <dbReference type="ChEBI" id="CHEBI:61557"/>
        <dbReference type="ChEBI" id="CHEBI:140395"/>
        <dbReference type="EC" id="2.7.7.6"/>
    </reaction>
</comment>
<comment type="subunit">
    <text evidence="1">The RNAP catalytic core consists of 2 alpha, 1 beta, 1 beta' and 1 omega subunit. When a sigma factor is associated with the core the holoenzyme is formed, which can initiate transcription.</text>
</comment>
<comment type="similarity">
    <text evidence="1">Belongs to the RNA polymerase beta chain family.</text>
</comment>